<dbReference type="EC" id="5.3.1.5" evidence="1"/>
<dbReference type="EMBL" id="AL590842">
    <property type="protein sequence ID" value="CAL22614.1"/>
    <property type="molecule type" value="Genomic_DNA"/>
</dbReference>
<dbReference type="EMBL" id="AE009952">
    <property type="protein sequence ID" value="AAM87601.1"/>
    <property type="molecule type" value="Genomic_DNA"/>
</dbReference>
<dbReference type="EMBL" id="AE017042">
    <property type="protein sequence ID" value="AAS63561.1"/>
    <property type="molecule type" value="Genomic_DNA"/>
</dbReference>
<dbReference type="PIR" id="AC0491">
    <property type="entry name" value="AC0491"/>
</dbReference>
<dbReference type="RefSeq" id="WP_002209593.1">
    <property type="nucleotide sequence ID" value="NZ_WUCM01000040.1"/>
</dbReference>
<dbReference type="RefSeq" id="YP_002348901.1">
    <property type="nucleotide sequence ID" value="NC_003143.1"/>
</dbReference>
<dbReference type="SMR" id="Q8Z9Z1"/>
<dbReference type="IntAct" id="Q8Z9Z1">
    <property type="interactions" value="1"/>
</dbReference>
<dbReference type="STRING" id="214092.YPO4038"/>
<dbReference type="PaxDb" id="214092-YPO4038"/>
<dbReference type="EnsemblBacteria" id="AAS63561">
    <property type="protein sequence ID" value="AAS63561"/>
    <property type="gene ID" value="YP_3400"/>
</dbReference>
<dbReference type="GeneID" id="57974675"/>
<dbReference type="KEGG" id="ype:YPO4038"/>
<dbReference type="KEGG" id="ypk:y4057"/>
<dbReference type="KEGG" id="ypm:YP_3400"/>
<dbReference type="PATRIC" id="fig|214092.21.peg.4573"/>
<dbReference type="eggNOG" id="COG2115">
    <property type="taxonomic scope" value="Bacteria"/>
</dbReference>
<dbReference type="HOGENOM" id="CLU_037261_1_0_6"/>
<dbReference type="OMA" id="IAYWHTF"/>
<dbReference type="OrthoDB" id="9763981at2"/>
<dbReference type="Proteomes" id="UP000000815">
    <property type="component" value="Chromosome"/>
</dbReference>
<dbReference type="Proteomes" id="UP000001019">
    <property type="component" value="Chromosome"/>
</dbReference>
<dbReference type="Proteomes" id="UP000002490">
    <property type="component" value="Chromosome"/>
</dbReference>
<dbReference type="GO" id="GO:0005737">
    <property type="term" value="C:cytoplasm"/>
    <property type="evidence" value="ECO:0007669"/>
    <property type="project" value="UniProtKB-SubCell"/>
</dbReference>
<dbReference type="GO" id="GO:0000287">
    <property type="term" value="F:magnesium ion binding"/>
    <property type="evidence" value="ECO:0007669"/>
    <property type="project" value="UniProtKB-UniRule"/>
</dbReference>
<dbReference type="GO" id="GO:0009045">
    <property type="term" value="F:xylose isomerase activity"/>
    <property type="evidence" value="ECO:0000318"/>
    <property type="project" value="GO_Central"/>
</dbReference>
<dbReference type="GO" id="GO:0042843">
    <property type="term" value="P:D-xylose catabolic process"/>
    <property type="evidence" value="ECO:0000318"/>
    <property type="project" value="GO_Central"/>
</dbReference>
<dbReference type="FunFam" id="3.20.20.150:FF:000002">
    <property type="entry name" value="Xylose isomerase"/>
    <property type="match status" value="1"/>
</dbReference>
<dbReference type="Gene3D" id="3.20.20.150">
    <property type="entry name" value="Divalent-metal-dependent TIM barrel enzymes"/>
    <property type="match status" value="1"/>
</dbReference>
<dbReference type="HAMAP" id="MF_00455">
    <property type="entry name" value="Xylose_isom_A"/>
    <property type="match status" value="1"/>
</dbReference>
<dbReference type="InterPro" id="IPR036237">
    <property type="entry name" value="Xyl_isomerase-like_sf"/>
</dbReference>
<dbReference type="InterPro" id="IPR013452">
    <property type="entry name" value="Xylose_isom_bac"/>
</dbReference>
<dbReference type="InterPro" id="IPR001998">
    <property type="entry name" value="Xylose_isomerase"/>
</dbReference>
<dbReference type="NCBIfam" id="NF003998">
    <property type="entry name" value="PRK05474.1"/>
    <property type="match status" value="1"/>
</dbReference>
<dbReference type="NCBIfam" id="TIGR02630">
    <property type="entry name" value="xylose_isom_A"/>
    <property type="match status" value="1"/>
</dbReference>
<dbReference type="PANTHER" id="PTHR48408">
    <property type="match status" value="1"/>
</dbReference>
<dbReference type="PANTHER" id="PTHR48408:SF1">
    <property type="entry name" value="XYLOSE ISOMERASE"/>
    <property type="match status" value="1"/>
</dbReference>
<dbReference type="PRINTS" id="PR00688">
    <property type="entry name" value="XYLOSISMRASE"/>
</dbReference>
<dbReference type="SUPFAM" id="SSF51658">
    <property type="entry name" value="Xylose isomerase-like"/>
    <property type="match status" value="1"/>
</dbReference>
<dbReference type="PROSITE" id="PS51415">
    <property type="entry name" value="XYLOSE_ISOMERASE"/>
    <property type="match status" value="1"/>
</dbReference>
<accession>Q8Z9Z1</accession>
<accession>Q0W9Y7</accession>
<accession>Q74QR2</accession>
<accession>Q7CFR0</accession>
<feature type="chain" id="PRO_0000195823" description="Xylose isomerase">
    <location>
        <begin position="1"/>
        <end position="439"/>
    </location>
</feature>
<feature type="active site" evidence="1">
    <location>
        <position position="101"/>
    </location>
</feature>
<feature type="active site" evidence="1">
    <location>
        <position position="104"/>
    </location>
</feature>
<feature type="binding site" evidence="1">
    <location>
        <position position="232"/>
    </location>
    <ligand>
        <name>Mg(2+)</name>
        <dbReference type="ChEBI" id="CHEBI:18420"/>
        <label>1</label>
    </ligand>
</feature>
<feature type="binding site" evidence="1">
    <location>
        <position position="268"/>
    </location>
    <ligand>
        <name>Mg(2+)</name>
        <dbReference type="ChEBI" id="CHEBI:18420"/>
        <label>1</label>
    </ligand>
</feature>
<feature type="binding site" evidence="1">
    <location>
        <position position="268"/>
    </location>
    <ligand>
        <name>Mg(2+)</name>
        <dbReference type="ChEBI" id="CHEBI:18420"/>
        <label>2</label>
    </ligand>
</feature>
<feature type="binding site" evidence="1">
    <location>
        <position position="271"/>
    </location>
    <ligand>
        <name>Mg(2+)</name>
        <dbReference type="ChEBI" id="CHEBI:18420"/>
        <label>2</label>
    </ligand>
</feature>
<feature type="binding site" evidence="1">
    <location>
        <position position="296"/>
    </location>
    <ligand>
        <name>Mg(2+)</name>
        <dbReference type="ChEBI" id="CHEBI:18420"/>
        <label>1</label>
    </ligand>
</feature>
<feature type="binding site" evidence="1">
    <location>
        <position position="307"/>
    </location>
    <ligand>
        <name>Mg(2+)</name>
        <dbReference type="ChEBI" id="CHEBI:18420"/>
        <label>2</label>
    </ligand>
</feature>
<feature type="binding site" evidence="1">
    <location>
        <position position="309"/>
    </location>
    <ligand>
        <name>Mg(2+)</name>
        <dbReference type="ChEBI" id="CHEBI:18420"/>
        <label>2</label>
    </ligand>
</feature>
<feature type="binding site" evidence="1">
    <location>
        <position position="339"/>
    </location>
    <ligand>
        <name>Mg(2+)</name>
        <dbReference type="ChEBI" id="CHEBI:18420"/>
        <label>1</label>
    </ligand>
</feature>
<gene>
    <name evidence="1" type="primary">xylA</name>
    <name type="ordered locus">YPO4038</name>
    <name type="ordered locus">y4057</name>
    <name type="ordered locus">YP_3400</name>
</gene>
<protein>
    <recommendedName>
        <fullName evidence="1">Xylose isomerase</fullName>
        <ecNumber evidence="1">5.3.1.5</ecNumber>
    </recommendedName>
</protein>
<name>XYLA_YERPE</name>
<evidence type="ECO:0000255" key="1">
    <source>
        <dbReference type="HAMAP-Rule" id="MF_00455"/>
    </source>
</evidence>
<keyword id="KW-0119">Carbohydrate metabolism</keyword>
<keyword id="KW-0963">Cytoplasm</keyword>
<keyword id="KW-0413">Isomerase</keyword>
<keyword id="KW-0460">Magnesium</keyword>
<keyword id="KW-0479">Metal-binding</keyword>
<keyword id="KW-1185">Reference proteome</keyword>
<keyword id="KW-0859">Xylose metabolism</keyword>
<organism>
    <name type="scientific">Yersinia pestis</name>
    <dbReference type="NCBI Taxonomy" id="632"/>
    <lineage>
        <taxon>Bacteria</taxon>
        <taxon>Pseudomonadati</taxon>
        <taxon>Pseudomonadota</taxon>
        <taxon>Gammaproteobacteria</taxon>
        <taxon>Enterobacterales</taxon>
        <taxon>Yersiniaceae</taxon>
        <taxon>Yersinia</taxon>
    </lineage>
</organism>
<reference key="1">
    <citation type="journal article" date="2001" name="Nature">
        <title>Genome sequence of Yersinia pestis, the causative agent of plague.</title>
        <authorList>
            <person name="Parkhill J."/>
            <person name="Wren B.W."/>
            <person name="Thomson N.R."/>
            <person name="Titball R.W."/>
            <person name="Holden M.T.G."/>
            <person name="Prentice M.B."/>
            <person name="Sebaihia M."/>
            <person name="James K.D."/>
            <person name="Churcher C.M."/>
            <person name="Mungall K.L."/>
            <person name="Baker S."/>
            <person name="Basham D."/>
            <person name="Bentley S.D."/>
            <person name="Brooks K."/>
            <person name="Cerdeno-Tarraga A.-M."/>
            <person name="Chillingworth T."/>
            <person name="Cronin A."/>
            <person name="Davies R.M."/>
            <person name="Davis P."/>
            <person name="Dougan G."/>
            <person name="Feltwell T."/>
            <person name="Hamlin N."/>
            <person name="Holroyd S."/>
            <person name="Jagels K."/>
            <person name="Karlyshev A.V."/>
            <person name="Leather S."/>
            <person name="Moule S."/>
            <person name="Oyston P.C.F."/>
            <person name="Quail M.A."/>
            <person name="Rutherford K.M."/>
            <person name="Simmonds M."/>
            <person name="Skelton J."/>
            <person name="Stevens K."/>
            <person name="Whitehead S."/>
            <person name="Barrell B.G."/>
        </authorList>
    </citation>
    <scope>NUCLEOTIDE SEQUENCE [LARGE SCALE GENOMIC DNA]</scope>
    <source>
        <strain>CO-92 / Biovar Orientalis</strain>
    </source>
</reference>
<reference key="2">
    <citation type="journal article" date="2002" name="J. Bacteriol.">
        <title>Genome sequence of Yersinia pestis KIM.</title>
        <authorList>
            <person name="Deng W."/>
            <person name="Burland V."/>
            <person name="Plunkett G. III"/>
            <person name="Boutin A."/>
            <person name="Mayhew G.F."/>
            <person name="Liss P."/>
            <person name="Perna N.T."/>
            <person name="Rose D.J."/>
            <person name="Mau B."/>
            <person name="Zhou S."/>
            <person name="Schwartz D.C."/>
            <person name="Fetherston J.D."/>
            <person name="Lindler L.E."/>
            <person name="Brubaker R.R."/>
            <person name="Plano G.V."/>
            <person name="Straley S.C."/>
            <person name="McDonough K.A."/>
            <person name="Nilles M.L."/>
            <person name="Matson J.S."/>
            <person name="Blattner F.R."/>
            <person name="Perry R.D."/>
        </authorList>
    </citation>
    <scope>NUCLEOTIDE SEQUENCE [LARGE SCALE GENOMIC DNA]</scope>
    <source>
        <strain>KIM10+ / Biovar Mediaevalis</strain>
    </source>
</reference>
<reference key="3">
    <citation type="journal article" date="2004" name="DNA Res.">
        <title>Complete genome sequence of Yersinia pestis strain 91001, an isolate avirulent to humans.</title>
        <authorList>
            <person name="Song Y."/>
            <person name="Tong Z."/>
            <person name="Wang J."/>
            <person name="Wang L."/>
            <person name="Guo Z."/>
            <person name="Han Y."/>
            <person name="Zhang J."/>
            <person name="Pei D."/>
            <person name="Zhou D."/>
            <person name="Qin H."/>
            <person name="Pang X."/>
            <person name="Han Y."/>
            <person name="Zhai J."/>
            <person name="Li M."/>
            <person name="Cui B."/>
            <person name="Qi Z."/>
            <person name="Jin L."/>
            <person name="Dai R."/>
            <person name="Chen F."/>
            <person name="Li S."/>
            <person name="Ye C."/>
            <person name="Du Z."/>
            <person name="Lin W."/>
            <person name="Wang J."/>
            <person name="Yu J."/>
            <person name="Yang H."/>
            <person name="Wang J."/>
            <person name="Huang P."/>
            <person name="Yang R."/>
        </authorList>
    </citation>
    <scope>NUCLEOTIDE SEQUENCE [LARGE SCALE GENOMIC DNA]</scope>
    <source>
        <strain>91001 / Biovar Mediaevalis</strain>
    </source>
</reference>
<sequence>MQSYFNELEQVRYEGSQSTNPLAFHHYNPDEMILGKRMADHLRFAACYWHTFCWGGADMFGANAFDRPWQQPGDALALAKRKAEVAFEFFHKLNVPYYCFHDVDVSPEGASLQEYLNNFAVMTDVLAEKQAASGVKLLWGTANCFTHPRYGAGAATNPDPEVFSWAATQVFTAMNATRQLGGENYVLWGGREGYETLLNTDLRQEREQIGRFMQMVVEHKHKTGFQGTLLIEPKPQEPTKHQYDYDVATVYGFLKQFGLEKEIKVNIEANHATLAGHSFHHEIASAIALGIFGSVDANRGDPQLGWDTDQFPNSVEENTLVMFEILKAGGFTTGGLNFDAKVRRQSTDKYDLFYGHIGAMDTMALALKFAAKMIEDGQLDQIVAKRYAGWNSELGQQILQGKMSLEELSRYASQHNLNPQHQSGHQELLENKVNRYLFG</sequence>
<comment type="catalytic activity">
    <reaction evidence="1">
        <text>alpha-D-xylose = alpha-D-xylulofuranose</text>
        <dbReference type="Rhea" id="RHEA:22816"/>
        <dbReference type="ChEBI" id="CHEBI:28518"/>
        <dbReference type="ChEBI" id="CHEBI:188998"/>
        <dbReference type="EC" id="5.3.1.5"/>
    </reaction>
</comment>
<comment type="cofactor">
    <cofactor evidence="1">
        <name>Mg(2+)</name>
        <dbReference type="ChEBI" id="CHEBI:18420"/>
    </cofactor>
    <text evidence="1">Binds 2 magnesium ions per subunit.</text>
</comment>
<comment type="subunit">
    <text evidence="1">Homotetramer.</text>
</comment>
<comment type="subcellular location">
    <subcellularLocation>
        <location evidence="1">Cytoplasm</location>
    </subcellularLocation>
</comment>
<comment type="similarity">
    <text evidence="1">Belongs to the xylose isomerase family.</text>
</comment>
<proteinExistence type="inferred from homology"/>